<feature type="chain" id="PRO_1000100993" description="Large ribosomal subunit protein bL36">
    <location>
        <begin position="1"/>
        <end position="38"/>
    </location>
</feature>
<comment type="similarity">
    <text evidence="1">Belongs to the bacterial ribosomal protein bL36 family.</text>
</comment>
<sequence>MKVQASVKKICGSCKVIRRNGVIRVICSAEPRHKQRQG</sequence>
<evidence type="ECO:0000255" key="1">
    <source>
        <dbReference type="HAMAP-Rule" id="MF_00251"/>
    </source>
</evidence>
<evidence type="ECO:0000305" key="2"/>
<name>RL36_ACIBY</name>
<protein>
    <recommendedName>
        <fullName evidence="1">Large ribosomal subunit protein bL36</fullName>
    </recommendedName>
    <alternativeName>
        <fullName evidence="2">50S ribosomal protein L36</fullName>
    </alternativeName>
</protein>
<proteinExistence type="inferred from homology"/>
<organism>
    <name type="scientific">Acinetobacter baumannii (strain AYE)</name>
    <dbReference type="NCBI Taxonomy" id="509173"/>
    <lineage>
        <taxon>Bacteria</taxon>
        <taxon>Pseudomonadati</taxon>
        <taxon>Pseudomonadota</taxon>
        <taxon>Gammaproteobacteria</taxon>
        <taxon>Moraxellales</taxon>
        <taxon>Moraxellaceae</taxon>
        <taxon>Acinetobacter</taxon>
        <taxon>Acinetobacter calcoaceticus/baumannii complex</taxon>
    </lineage>
</organism>
<accession>B0V6U3</accession>
<keyword id="KW-0687">Ribonucleoprotein</keyword>
<keyword id="KW-0689">Ribosomal protein</keyword>
<dbReference type="EMBL" id="CU459141">
    <property type="protein sequence ID" value="CAM85403.1"/>
    <property type="molecule type" value="Genomic_DNA"/>
</dbReference>
<dbReference type="RefSeq" id="WP_000867907.1">
    <property type="nucleotide sequence ID" value="NZ_JBDGFB010000011.1"/>
</dbReference>
<dbReference type="SMR" id="B0V6U3"/>
<dbReference type="EnsemblBacteria" id="CAM85403">
    <property type="protein sequence ID" value="CAM85403"/>
    <property type="gene ID" value="ABAYE0429"/>
</dbReference>
<dbReference type="GeneID" id="97425220"/>
<dbReference type="KEGG" id="aby:ABAYE0429"/>
<dbReference type="HOGENOM" id="CLU_135723_6_2_6"/>
<dbReference type="GO" id="GO:0005737">
    <property type="term" value="C:cytoplasm"/>
    <property type="evidence" value="ECO:0007669"/>
    <property type="project" value="UniProtKB-ARBA"/>
</dbReference>
<dbReference type="GO" id="GO:1990904">
    <property type="term" value="C:ribonucleoprotein complex"/>
    <property type="evidence" value="ECO:0007669"/>
    <property type="project" value="UniProtKB-KW"/>
</dbReference>
<dbReference type="GO" id="GO:0005840">
    <property type="term" value="C:ribosome"/>
    <property type="evidence" value="ECO:0007669"/>
    <property type="project" value="UniProtKB-KW"/>
</dbReference>
<dbReference type="GO" id="GO:0003735">
    <property type="term" value="F:structural constituent of ribosome"/>
    <property type="evidence" value="ECO:0007669"/>
    <property type="project" value="InterPro"/>
</dbReference>
<dbReference type="GO" id="GO:0006412">
    <property type="term" value="P:translation"/>
    <property type="evidence" value="ECO:0007669"/>
    <property type="project" value="UniProtKB-UniRule"/>
</dbReference>
<dbReference type="HAMAP" id="MF_00251">
    <property type="entry name" value="Ribosomal_bL36"/>
    <property type="match status" value="1"/>
</dbReference>
<dbReference type="InterPro" id="IPR000473">
    <property type="entry name" value="Ribosomal_bL36"/>
</dbReference>
<dbReference type="InterPro" id="IPR035977">
    <property type="entry name" value="Ribosomal_bL36_sp"/>
</dbReference>
<dbReference type="NCBIfam" id="TIGR01022">
    <property type="entry name" value="rpmJ_bact"/>
    <property type="match status" value="1"/>
</dbReference>
<dbReference type="PANTHER" id="PTHR42888">
    <property type="entry name" value="50S RIBOSOMAL PROTEIN L36, CHLOROPLASTIC"/>
    <property type="match status" value="1"/>
</dbReference>
<dbReference type="PANTHER" id="PTHR42888:SF1">
    <property type="entry name" value="LARGE RIBOSOMAL SUBUNIT PROTEIN BL36C"/>
    <property type="match status" value="1"/>
</dbReference>
<dbReference type="Pfam" id="PF00444">
    <property type="entry name" value="Ribosomal_L36"/>
    <property type="match status" value="1"/>
</dbReference>
<dbReference type="SUPFAM" id="SSF57840">
    <property type="entry name" value="Ribosomal protein L36"/>
    <property type="match status" value="1"/>
</dbReference>
<dbReference type="PROSITE" id="PS00828">
    <property type="entry name" value="RIBOSOMAL_L36"/>
    <property type="match status" value="1"/>
</dbReference>
<gene>
    <name evidence="1" type="primary">rpmJ</name>
    <name type="ordered locus">ABAYE0429</name>
</gene>
<reference key="1">
    <citation type="journal article" date="2008" name="PLoS ONE">
        <title>Comparative analysis of Acinetobacters: three genomes for three lifestyles.</title>
        <authorList>
            <person name="Vallenet D."/>
            <person name="Nordmann P."/>
            <person name="Barbe V."/>
            <person name="Poirel L."/>
            <person name="Mangenot S."/>
            <person name="Bataille E."/>
            <person name="Dossat C."/>
            <person name="Gas S."/>
            <person name="Kreimeyer A."/>
            <person name="Lenoble P."/>
            <person name="Oztas S."/>
            <person name="Poulain J."/>
            <person name="Segurens B."/>
            <person name="Robert C."/>
            <person name="Abergel C."/>
            <person name="Claverie J.-M."/>
            <person name="Raoult D."/>
            <person name="Medigue C."/>
            <person name="Weissenbach J."/>
            <person name="Cruveiller S."/>
        </authorList>
    </citation>
    <scope>NUCLEOTIDE SEQUENCE [LARGE SCALE GENOMIC DNA]</scope>
    <source>
        <strain>AYE</strain>
    </source>
</reference>